<dbReference type="EMBL" id="AB180926">
    <property type="protein sequence ID" value="BAD22551.1"/>
    <property type="molecule type" value="Genomic_DNA"/>
</dbReference>
<dbReference type="RefSeq" id="YP_008474401.1">
    <property type="nucleotide sequence ID" value="NC_022135.1"/>
</dbReference>
<dbReference type="GeneID" id="65348722"/>
<dbReference type="GO" id="GO:0009535">
    <property type="term" value="C:chloroplast thylakoid membrane"/>
    <property type="evidence" value="ECO:0007669"/>
    <property type="project" value="UniProtKB-SubCell"/>
</dbReference>
<dbReference type="GO" id="GO:0009522">
    <property type="term" value="C:photosystem I"/>
    <property type="evidence" value="ECO:0007669"/>
    <property type="project" value="InterPro"/>
</dbReference>
<dbReference type="GO" id="GO:0015979">
    <property type="term" value="P:photosynthesis"/>
    <property type="evidence" value="ECO:0007669"/>
    <property type="project" value="UniProtKB-UniRule"/>
</dbReference>
<dbReference type="HAMAP" id="MF_00437">
    <property type="entry name" value="Ycf4"/>
    <property type="match status" value="1"/>
</dbReference>
<dbReference type="InterPro" id="IPR003359">
    <property type="entry name" value="PSI_Ycf4_assembly"/>
</dbReference>
<dbReference type="PANTHER" id="PTHR33288">
    <property type="match status" value="1"/>
</dbReference>
<dbReference type="PANTHER" id="PTHR33288:SF4">
    <property type="entry name" value="PHOTOSYSTEM I ASSEMBLY PROTEIN YCF4"/>
    <property type="match status" value="1"/>
</dbReference>
<dbReference type="Pfam" id="PF02392">
    <property type="entry name" value="Ycf4"/>
    <property type="match status" value="1"/>
</dbReference>
<protein>
    <recommendedName>
        <fullName evidence="1">Photosystem I assembly protein Ycf4</fullName>
    </recommendedName>
</protein>
<reference key="1">
    <citation type="submission" date="2004-06" db="EMBL/GenBank/DDBJ databases">
        <title>Large recurrent deletions in a hotspot region of chloroplast genomes account for length variations of common wheat and its relative, Aegilops.</title>
        <authorList>
            <person name="Guo C."/>
            <person name="Terachi T."/>
        </authorList>
    </citation>
    <scope>NUCLEOTIDE SEQUENCE [GENOMIC DNA]</scope>
</reference>
<organism>
    <name type="scientific">Aegilops speltoides</name>
    <name type="common">Goatgrass</name>
    <name type="synonym">Triticum speltoides</name>
    <dbReference type="NCBI Taxonomy" id="4573"/>
    <lineage>
        <taxon>Eukaryota</taxon>
        <taxon>Viridiplantae</taxon>
        <taxon>Streptophyta</taxon>
        <taxon>Embryophyta</taxon>
        <taxon>Tracheophyta</taxon>
        <taxon>Spermatophyta</taxon>
        <taxon>Magnoliopsida</taxon>
        <taxon>Liliopsida</taxon>
        <taxon>Poales</taxon>
        <taxon>Poaceae</taxon>
        <taxon>BOP clade</taxon>
        <taxon>Pooideae</taxon>
        <taxon>Triticodae</taxon>
        <taxon>Triticeae</taxon>
        <taxon>Triticinae</taxon>
        <taxon>Aegilops</taxon>
    </lineage>
</organism>
<comment type="function">
    <text evidence="1">Seems to be required for the assembly of the photosystem I complex.</text>
</comment>
<comment type="subcellular location">
    <subcellularLocation>
        <location evidence="1">Plastid</location>
        <location evidence="1">Chloroplast thylakoid membrane</location>
        <topology evidence="1">Multi-pass membrane protein</topology>
    </subcellularLocation>
</comment>
<comment type="similarity">
    <text evidence="1">Belongs to the Ycf4 family.</text>
</comment>
<name>YCF4_AEGSP</name>
<geneLocation type="chloroplast"/>
<proteinExistence type="inferred from homology"/>
<evidence type="ECO:0000255" key="1">
    <source>
        <dbReference type="HAMAP-Rule" id="MF_00437"/>
    </source>
</evidence>
<sequence>MNWRSEHIWVELLKGSRKRGNFFWACILFLGSLGFLSVGISSYLGKNIISILPSQEILFFPQGVVMSFYGIAGLFISSYLWCTILWNVGSGYDRFDRKEGIVCIFRWGFPGIKRRVFLRFLMRDIQSIRIQVKEGLYPRRILYMEIRGQGIIPLTRTDDKFFTPREIEQKAAELAYFLRVPIEVF</sequence>
<feature type="chain" id="PRO_0000217592" description="Photosystem I assembly protein Ycf4">
    <location>
        <begin position="1"/>
        <end position="185"/>
    </location>
</feature>
<feature type="transmembrane region" description="Helical" evidence="1">
    <location>
        <begin position="21"/>
        <end position="43"/>
    </location>
</feature>
<feature type="transmembrane region" description="Helical" evidence="1">
    <location>
        <begin position="63"/>
        <end position="85"/>
    </location>
</feature>
<gene>
    <name evidence="1" type="primary">ycf4</name>
</gene>
<keyword id="KW-0150">Chloroplast</keyword>
<keyword id="KW-0472">Membrane</keyword>
<keyword id="KW-0602">Photosynthesis</keyword>
<keyword id="KW-0934">Plastid</keyword>
<keyword id="KW-0793">Thylakoid</keyword>
<keyword id="KW-0812">Transmembrane</keyword>
<keyword id="KW-1133">Transmembrane helix</keyword>
<accession>Q6L602</accession>